<feature type="chain" id="PRO_0000449437" description="Cytochrome P450 monooxygenase CYP2">
    <location>
        <begin position="1"/>
        <end position="453"/>
    </location>
</feature>
<feature type="transmembrane region" description="Helical" evidence="2">
    <location>
        <begin position="13"/>
        <end position="29"/>
    </location>
</feature>
<feature type="binding site" description="axial binding residue" evidence="1">
    <location>
        <position position="397"/>
    </location>
    <ligand>
        <name>heme</name>
        <dbReference type="ChEBI" id="CHEBI:30413"/>
    </ligand>
    <ligandPart>
        <name>Fe</name>
        <dbReference type="ChEBI" id="CHEBI:18248"/>
    </ligandPart>
</feature>
<feature type="glycosylation site" description="N-linked (GlcNAc...) asparagine" evidence="3">
    <location>
        <position position="85"/>
    </location>
</feature>
<dbReference type="EC" id="1.-.-.-" evidence="10"/>
<dbReference type="EMBL" id="CM001232">
    <property type="protein sequence ID" value="EHA55868.1"/>
    <property type="molecule type" value="Genomic_DNA"/>
</dbReference>
<dbReference type="RefSeq" id="XP_003715675.1">
    <property type="nucleotide sequence ID" value="XM_003715627.1"/>
</dbReference>
<dbReference type="SMR" id="G4MWA8"/>
<dbReference type="STRING" id="242507.G4MWA8"/>
<dbReference type="EnsemblFungi" id="MGG_15928T0">
    <property type="protein sequence ID" value="MGG_15928T0"/>
    <property type="gene ID" value="MGG_15928"/>
</dbReference>
<dbReference type="GeneID" id="12986740"/>
<dbReference type="KEGG" id="mgr:MGG_15928"/>
<dbReference type="VEuPathDB" id="FungiDB:MGG_15928"/>
<dbReference type="eggNOG" id="KOG0156">
    <property type="taxonomic scope" value="Eukaryota"/>
</dbReference>
<dbReference type="HOGENOM" id="CLU_022195_0_0_1"/>
<dbReference type="InParanoid" id="G4MWA8"/>
<dbReference type="OMA" id="YEMKWPD"/>
<dbReference type="OrthoDB" id="1844152at2759"/>
<dbReference type="Proteomes" id="UP000009058">
    <property type="component" value="Chromosome 2"/>
</dbReference>
<dbReference type="GO" id="GO:0016020">
    <property type="term" value="C:membrane"/>
    <property type="evidence" value="ECO:0007669"/>
    <property type="project" value="UniProtKB-SubCell"/>
</dbReference>
<dbReference type="GO" id="GO:0020037">
    <property type="term" value="F:heme binding"/>
    <property type="evidence" value="ECO:0007669"/>
    <property type="project" value="InterPro"/>
</dbReference>
<dbReference type="GO" id="GO:0005506">
    <property type="term" value="F:iron ion binding"/>
    <property type="evidence" value="ECO:0007669"/>
    <property type="project" value="InterPro"/>
</dbReference>
<dbReference type="GO" id="GO:0004497">
    <property type="term" value="F:monooxygenase activity"/>
    <property type="evidence" value="ECO:0007669"/>
    <property type="project" value="UniProtKB-KW"/>
</dbReference>
<dbReference type="GO" id="GO:0016705">
    <property type="term" value="F:oxidoreductase activity, acting on paired donors, with incorporation or reduction of molecular oxygen"/>
    <property type="evidence" value="ECO:0007669"/>
    <property type="project" value="InterPro"/>
</dbReference>
<dbReference type="GO" id="GO:0019748">
    <property type="term" value="P:secondary metabolic process"/>
    <property type="evidence" value="ECO:0007669"/>
    <property type="project" value="UniProtKB-ARBA"/>
</dbReference>
<dbReference type="CDD" id="cd11041">
    <property type="entry name" value="CYP503A1-like"/>
    <property type="match status" value="1"/>
</dbReference>
<dbReference type="Gene3D" id="1.10.630.10">
    <property type="entry name" value="Cytochrome P450"/>
    <property type="match status" value="1"/>
</dbReference>
<dbReference type="InterPro" id="IPR001128">
    <property type="entry name" value="Cyt_P450"/>
</dbReference>
<dbReference type="InterPro" id="IPR017972">
    <property type="entry name" value="Cyt_P450_CS"/>
</dbReference>
<dbReference type="InterPro" id="IPR002403">
    <property type="entry name" value="Cyt_P450_E_grp-IV"/>
</dbReference>
<dbReference type="InterPro" id="IPR036396">
    <property type="entry name" value="Cyt_P450_sf"/>
</dbReference>
<dbReference type="PANTHER" id="PTHR46206">
    <property type="entry name" value="CYTOCHROME P450"/>
    <property type="match status" value="1"/>
</dbReference>
<dbReference type="PANTHER" id="PTHR46206:SF7">
    <property type="entry name" value="P450, PUTATIVE (EUROFUNG)-RELATED"/>
    <property type="match status" value="1"/>
</dbReference>
<dbReference type="Pfam" id="PF00067">
    <property type="entry name" value="p450"/>
    <property type="match status" value="1"/>
</dbReference>
<dbReference type="PRINTS" id="PR00465">
    <property type="entry name" value="EP450IV"/>
</dbReference>
<dbReference type="SUPFAM" id="SSF48264">
    <property type="entry name" value="Cytochrome P450"/>
    <property type="match status" value="1"/>
</dbReference>
<dbReference type="PROSITE" id="PS00086">
    <property type="entry name" value="CYTOCHROME_P450"/>
    <property type="match status" value="1"/>
</dbReference>
<name>CYP2B_PYRO7</name>
<accession>G4MWA8</accession>
<reference key="1">
    <citation type="journal article" date="2005" name="Nature">
        <title>The genome sequence of the rice blast fungus Magnaporthe grisea.</title>
        <authorList>
            <person name="Dean R.A."/>
            <person name="Talbot N.J."/>
            <person name="Ebbole D.J."/>
            <person name="Farman M.L."/>
            <person name="Mitchell T.K."/>
            <person name="Orbach M.J."/>
            <person name="Thon M.R."/>
            <person name="Kulkarni R."/>
            <person name="Xu J.-R."/>
            <person name="Pan H."/>
            <person name="Read N.D."/>
            <person name="Lee Y.-H."/>
            <person name="Carbone I."/>
            <person name="Brown D."/>
            <person name="Oh Y.Y."/>
            <person name="Donofrio N."/>
            <person name="Jeong J.S."/>
            <person name="Soanes D.M."/>
            <person name="Djonovic S."/>
            <person name="Kolomiets E."/>
            <person name="Rehmeyer C."/>
            <person name="Li W."/>
            <person name="Harding M."/>
            <person name="Kim S."/>
            <person name="Lebrun M.-H."/>
            <person name="Bohnert H."/>
            <person name="Coughlan S."/>
            <person name="Butler J."/>
            <person name="Calvo S.E."/>
            <person name="Ma L.-J."/>
            <person name="Nicol R."/>
            <person name="Purcell S."/>
            <person name="Nusbaum C."/>
            <person name="Galagan J.E."/>
            <person name="Birren B.W."/>
        </authorList>
    </citation>
    <scope>NUCLEOTIDE SEQUENCE [LARGE SCALE GENOMIC DNA]</scope>
    <source>
        <strain>70-15 / ATCC MYA-4617 / FGSC 8958</strain>
    </source>
</reference>
<reference key="2">
    <citation type="journal article" date="2008" name="New Phytol.">
        <title>Magnaporthe grisea avirulence gene ACE1 belongs to an infection-specific gene cluster involved in secondary metabolism.</title>
        <authorList>
            <person name="Collemare J."/>
            <person name="Pianfetti M."/>
            <person name="Houlle A.E."/>
            <person name="Morin D."/>
            <person name="Camborde L."/>
            <person name="Gagey M.J."/>
            <person name="Barbisan C."/>
            <person name="Fudal I."/>
            <person name="Lebrun M.H."/>
            <person name="Boehnert H.U."/>
        </authorList>
    </citation>
    <scope>FUNCTION</scope>
    <scope>INDUCTION</scope>
    <scope>PATHWAY</scope>
</reference>
<reference key="3">
    <citation type="journal article" date="2015" name="Chem. Sci.">
        <title>Heterologous expression of the avirulence gene ACE1 from the fungal rice pathogen Magnaporthe oryzae.</title>
        <authorList>
            <person name="Song Z."/>
            <person name="Bakeer W."/>
            <person name="Marshall J.W."/>
            <person name="Yakasai A.A."/>
            <person name="Khalid R.M."/>
            <person name="Collemare J."/>
            <person name="Skellam E."/>
            <person name="Tharreau D."/>
            <person name="Lebrun M.H."/>
            <person name="Lazarus C.M."/>
            <person name="Bailey A.M."/>
            <person name="Simpson T.J."/>
            <person name="Cox R.J."/>
        </authorList>
    </citation>
    <scope>FUNCTION</scope>
</reference>
<reference key="4">
    <citation type="journal article" date="2019" name="Org. Lett.">
        <title>Investigating the function of cryptic cytochalasan cytochrome P450 monooxygenases using combinatorial biosynthesis.</title>
        <authorList>
            <person name="Wang C."/>
            <person name="Becker K."/>
            <person name="Pfuetze S."/>
            <person name="Kuhnert E."/>
            <person name="Stadler M."/>
            <person name="Cox R.J."/>
            <person name="Skellam E."/>
        </authorList>
    </citation>
    <scope>FUNCTION</scope>
</reference>
<organism>
    <name type="scientific">Pyricularia oryzae (strain 70-15 / ATCC MYA-4617 / FGSC 8958)</name>
    <name type="common">Rice blast fungus</name>
    <name type="synonym">Magnaporthe oryzae</name>
    <dbReference type="NCBI Taxonomy" id="242507"/>
    <lineage>
        <taxon>Eukaryota</taxon>
        <taxon>Fungi</taxon>
        <taxon>Dikarya</taxon>
        <taxon>Ascomycota</taxon>
        <taxon>Pezizomycotina</taxon>
        <taxon>Sordariomycetes</taxon>
        <taxon>Sordariomycetidae</taxon>
        <taxon>Magnaporthales</taxon>
        <taxon>Pyriculariaceae</taxon>
        <taxon>Pyricularia</taxon>
    </lineage>
</organism>
<protein>
    <recommendedName>
        <fullName evidence="7">Cytochrome P450 monooxygenase CYP2</fullName>
        <ecNumber evidence="10">1.-.-.-</ecNumber>
    </recommendedName>
    <alternativeName>
        <fullName evidence="8">ACE1 cytochalasan biosynthesis cluster protein CYP2</fullName>
    </alternativeName>
</protein>
<comment type="function">
    <text evidence="4 5 6 10 11">Cytochrome P450 monooxygenase; part of the gene cluster that mediates the biosynthesis of a tyrosine-derived cytochalasan acting as a fungal signal recognized by resistant rice plants and leads to avirulence in Pi33 resistant rice cultivars (PubMed:18433432). The first step in the pathway is catalyzed by the hybrid PKS-NRPS ACE1, assisted by the enoyl reductase RAP1, that are responsible for fusion of the tyrosine precursor and the polyketide backbone (PubMed:29142718). The polyketide synthase module (PKS) of ACE1 is responsible for the synthesis of the polyketide backbone and the downstream nonribosomal peptide synthetase (NRPS) amidates the carboxyl end of the polyketide with the tyrosine precursor (PubMed:29142718). Because ACE1 lacks a designated enoylreductase (ER) domain, the required activity is provided the enoyl reductase RAP1 (PubMed:29142718). Reduction by the hydrolyase ORFZ, followed by dehydration and intra-molecular Diels-Alder cyclization by the Diels-Alderase ORF3 then yield the required isoindolone-fused macrocycle (Probable). A number of oxidative steps catalyzed by the tailoring enzymes identified within the cluster, including cytochrome P450 monooxygenases CYP1 to CYP4, the FAD-linked oxidoreductase OXR2 and the short-chain dehydrogenase/reductase OXR1, are further required to afford the final cytochalasans that confer avirulence and which have still to be identified (Probable). The monooxygenase CYP1 has been shown to be a site-selective C-18 hydroxylase whereas the function of CYP3 is the site-selective epoxidation of the C-6/C-7 olefin that is present in some intermediate compounds (PubMed:31644300). Finally, SYN2 and RAP2 are not required for avirulence in Pi33 resistant rice cultivars (PubMed:18433432).</text>
</comment>
<comment type="cofactor">
    <cofactor evidence="1">
        <name>heme</name>
        <dbReference type="ChEBI" id="CHEBI:30413"/>
    </cofactor>
</comment>
<comment type="pathway">
    <text evidence="10">Secondary metabolite biosynthesis.</text>
</comment>
<comment type="subcellular location">
    <subcellularLocation>
        <location evidence="2">Membrane</location>
        <topology evidence="2">Single-pass membrane protein</topology>
    </subcellularLocation>
</comment>
<comment type="induction">
    <text evidence="4">Expressed exclusively during fungal penetration of host leaves, the time point at which plant defense reactions are triggered.</text>
</comment>
<comment type="similarity">
    <text evidence="9">Belongs to the cytochrome P450 family.</text>
</comment>
<proteinExistence type="evidence at transcript level"/>
<gene>
    <name type="ORF">MGG_15928</name>
</gene>
<evidence type="ECO:0000250" key="1">
    <source>
        <dbReference type="UniProtKB" id="P04798"/>
    </source>
</evidence>
<evidence type="ECO:0000255" key="2"/>
<evidence type="ECO:0000255" key="3">
    <source>
        <dbReference type="PROSITE-ProRule" id="PRU00498"/>
    </source>
</evidence>
<evidence type="ECO:0000269" key="4">
    <source>
    </source>
</evidence>
<evidence type="ECO:0000269" key="5">
    <source>
    </source>
</evidence>
<evidence type="ECO:0000269" key="6">
    <source>
    </source>
</evidence>
<evidence type="ECO:0000303" key="7">
    <source>
    </source>
</evidence>
<evidence type="ECO:0000303" key="8">
    <source>
    </source>
</evidence>
<evidence type="ECO:0000305" key="9"/>
<evidence type="ECO:0000305" key="10">
    <source>
    </source>
</evidence>
<evidence type="ECO:0000305" key="11">
    <source>
    </source>
</evidence>
<keyword id="KW-0325">Glycoprotein</keyword>
<keyword id="KW-0349">Heme</keyword>
<keyword id="KW-0408">Iron</keyword>
<keyword id="KW-0472">Membrane</keyword>
<keyword id="KW-0479">Metal-binding</keyword>
<keyword id="KW-0503">Monooxygenase</keyword>
<keyword id="KW-0560">Oxidoreductase</keyword>
<keyword id="KW-1185">Reference proteome</keyword>
<keyword id="KW-0812">Transmembrane</keyword>
<keyword id="KW-1133">Transmembrane helix</keyword>
<sequence>MKLRVSQSPTPQMVITMLHGSSTYSLLASKKRNSNVVGQYIKNGIPFRMRNPADPSQPQVILPFKYLSEMKNAAESSWSFMHFSNQSFLLEYINAPLGSSIAHQVVRGELNKNLDWTALQPYMLFANTIARTTSLVLAGPELSANPEWTTIMVTFTMTLMQTSQEVRAKYSPWLRWLVPWIHPGAKNLYKIRKRCAQLLAPSYQNRRAGMVGDEKPFMDAIQWLMNKRTYKSKDLMKLSDDQLFLSVASIHSTSASTLSTLYDLLDRPECMDGILHEIRTIRAESKSSDWTKHDLDRLVKLDSFMKESQRYHPVGQVTVQRSNPRAYEFSDGLKIPANTQTCFLSYELNHDPDVYPDPETFDADRFLRMREKVDPQKYHFAYVSEDSINFGAGAHSCPGRHFAANEIKLMLCELLLGYEMKWPDGQSRPPTMFHDFSSNPNPGFDICIRERRL</sequence>